<sequence length="211" mass="24477">MRVRKRKGAEEHLENNPHYVISNPEEAKGRWHEIFGNNNPIHIEVGSGKGAFITGMAEQNPDINYIGIDIQLSVLSYALDKVLDSGAKNIKLLLVDGSSLSNYFDTGEVDLMYLNFSDPWPKKKHEKRRLTYKTFLDTYKDILPEQGEIHFKTDNRGLFEYSLASFSQYGMTLKQVWLDLHASDYQQNIMTEYERKFSNKGQVIYRVEARF</sequence>
<comment type="function">
    <text evidence="2">Catalyzes the formation of N(7)-methylguanine at position 46 (m7G46) in tRNA.</text>
</comment>
<comment type="catalytic activity">
    <reaction evidence="2">
        <text>guanosine(46) in tRNA + S-adenosyl-L-methionine = N(7)-methylguanosine(46) in tRNA + S-adenosyl-L-homocysteine</text>
        <dbReference type="Rhea" id="RHEA:42708"/>
        <dbReference type="Rhea" id="RHEA-COMP:10188"/>
        <dbReference type="Rhea" id="RHEA-COMP:10189"/>
        <dbReference type="ChEBI" id="CHEBI:57856"/>
        <dbReference type="ChEBI" id="CHEBI:59789"/>
        <dbReference type="ChEBI" id="CHEBI:74269"/>
        <dbReference type="ChEBI" id="CHEBI:74480"/>
        <dbReference type="EC" id="2.1.1.33"/>
    </reaction>
</comment>
<comment type="pathway">
    <text evidence="2">tRNA modification; N(7)-methylguanine-tRNA biosynthesis.</text>
</comment>
<comment type="similarity">
    <text evidence="2">Belongs to the class I-like SAM-binding methyltransferase superfamily. TrmB family.</text>
</comment>
<reference key="1">
    <citation type="journal article" date="2005" name="Proc. Natl. Acad. Sci. U.S.A.">
        <title>Genome analysis of multiple pathogenic isolates of Streptococcus agalactiae: implications for the microbial 'pan-genome'.</title>
        <authorList>
            <person name="Tettelin H."/>
            <person name="Masignani V."/>
            <person name="Cieslewicz M.J."/>
            <person name="Donati C."/>
            <person name="Medini D."/>
            <person name="Ward N.L."/>
            <person name="Angiuoli S.V."/>
            <person name="Crabtree J."/>
            <person name="Jones A.L."/>
            <person name="Durkin A.S."/>
            <person name="DeBoy R.T."/>
            <person name="Davidsen T.M."/>
            <person name="Mora M."/>
            <person name="Scarselli M."/>
            <person name="Margarit y Ros I."/>
            <person name="Peterson J.D."/>
            <person name="Hauser C.R."/>
            <person name="Sundaram J.P."/>
            <person name="Nelson W.C."/>
            <person name="Madupu R."/>
            <person name="Brinkac L.M."/>
            <person name="Dodson R.J."/>
            <person name="Rosovitz M.J."/>
            <person name="Sullivan S.A."/>
            <person name="Daugherty S.C."/>
            <person name="Haft D.H."/>
            <person name="Selengut J."/>
            <person name="Gwinn M.L."/>
            <person name="Zhou L."/>
            <person name="Zafar N."/>
            <person name="Khouri H."/>
            <person name="Radune D."/>
            <person name="Dimitrov G."/>
            <person name="Watkins K."/>
            <person name="O'Connor K.J."/>
            <person name="Smith S."/>
            <person name="Utterback T.R."/>
            <person name="White O."/>
            <person name="Rubens C.E."/>
            <person name="Grandi G."/>
            <person name="Madoff L.C."/>
            <person name="Kasper D.L."/>
            <person name="Telford J.L."/>
            <person name="Wessels M.R."/>
            <person name="Rappuoli R."/>
            <person name="Fraser C.M."/>
        </authorList>
    </citation>
    <scope>NUCLEOTIDE SEQUENCE [LARGE SCALE GENOMIC DNA]</scope>
    <source>
        <strain>ATCC 27591 / A909 / CDC SS700</strain>
    </source>
</reference>
<gene>
    <name evidence="2" type="primary">trmB</name>
    <name type="ordered locus">SAK_0449</name>
</gene>
<feature type="chain" id="PRO_0000229200" description="tRNA (guanine-N(7)-)-methyltransferase">
    <location>
        <begin position="1"/>
        <end position="211"/>
    </location>
</feature>
<feature type="region of interest" description="Interaction with RNA" evidence="2">
    <location>
        <begin position="124"/>
        <end position="129"/>
    </location>
</feature>
<feature type="active site" evidence="1">
    <location>
        <position position="118"/>
    </location>
</feature>
<feature type="binding site" evidence="2">
    <location>
        <position position="44"/>
    </location>
    <ligand>
        <name>S-adenosyl-L-methionine</name>
        <dbReference type="ChEBI" id="CHEBI:59789"/>
    </ligand>
</feature>
<feature type="binding site" evidence="2">
    <location>
        <position position="69"/>
    </location>
    <ligand>
        <name>S-adenosyl-L-methionine</name>
        <dbReference type="ChEBI" id="CHEBI:59789"/>
    </ligand>
</feature>
<feature type="binding site" evidence="2">
    <location>
        <position position="96"/>
    </location>
    <ligand>
        <name>S-adenosyl-L-methionine</name>
        <dbReference type="ChEBI" id="CHEBI:59789"/>
    </ligand>
</feature>
<feature type="binding site" evidence="2">
    <location>
        <position position="118"/>
    </location>
    <ligand>
        <name>S-adenosyl-L-methionine</name>
        <dbReference type="ChEBI" id="CHEBI:59789"/>
    </ligand>
</feature>
<feature type="binding site" evidence="2">
    <location>
        <position position="122"/>
    </location>
    <ligand>
        <name>substrate</name>
    </ligand>
</feature>
<feature type="binding site" evidence="2">
    <location>
        <position position="154"/>
    </location>
    <ligand>
        <name>substrate</name>
    </ligand>
</feature>
<feature type="binding site" evidence="2">
    <location>
        <begin position="191"/>
        <end position="194"/>
    </location>
    <ligand>
        <name>substrate</name>
    </ligand>
</feature>
<keyword id="KW-0489">Methyltransferase</keyword>
<keyword id="KW-0949">S-adenosyl-L-methionine</keyword>
<keyword id="KW-0808">Transferase</keyword>
<keyword id="KW-0819">tRNA processing</keyword>
<organism>
    <name type="scientific">Streptococcus agalactiae serotype Ia (strain ATCC 27591 / A909 / CDC SS700)</name>
    <dbReference type="NCBI Taxonomy" id="205921"/>
    <lineage>
        <taxon>Bacteria</taxon>
        <taxon>Bacillati</taxon>
        <taxon>Bacillota</taxon>
        <taxon>Bacilli</taxon>
        <taxon>Lactobacillales</taxon>
        <taxon>Streptococcaceae</taxon>
        <taxon>Streptococcus</taxon>
    </lineage>
</organism>
<evidence type="ECO:0000250" key="1"/>
<evidence type="ECO:0000255" key="2">
    <source>
        <dbReference type="HAMAP-Rule" id="MF_01057"/>
    </source>
</evidence>
<name>TRMB_STRA1</name>
<proteinExistence type="inferred from homology"/>
<accession>Q3K307</accession>
<protein>
    <recommendedName>
        <fullName evidence="2">tRNA (guanine-N(7)-)-methyltransferase</fullName>
        <ecNumber evidence="2">2.1.1.33</ecNumber>
    </recommendedName>
    <alternativeName>
        <fullName evidence="2">tRNA (guanine(46)-N(7))-methyltransferase</fullName>
    </alternativeName>
    <alternativeName>
        <fullName evidence="2">tRNA(m7G46)-methyltransferase</fullName>
    </alternativeName>
</protein>
<dbReference type="EC" id="2.1.1.33" evidence="2"/>
<dbReference type="EMBL" id="CP000114">
    <property type="protein sequence ID" value="ABA45693.1"/>
    <property type="molecule type" value="Genomic_DNA"/>
</dbReference>
<dbReference type="RefSeq" id="WP_001266024.1">
    <property type="nucleotide sequence ID" value="NC_007432.1"/>
</dbReference>
<dbReference type="SMR" id="Q3K307"/>
<dbReference type="GeneID" id="66885350"/>
<dbReference type="KEGG" id="sak:SAK_0449"/>
<dbReference type="HOGENOM" id="CLU_050910_2_1_9"/>
<dbReference type="UniPathway" id="UPA00989"/>
<dbReference type="GO" id="GO:0043527">
    <property type="term" value="C:tRNA methyltransferase complex"/>
    <property type="evidence" value="ECO:0007669"/>
    <property type="project" value="TreeGrafter"/>
</dbReference>
<dbReference type="GO" id="GO:0008176">
    <property type="term" value="F:tRNA (guanine(46)-N7)-methyltransferase activity"/>
    <property type="evidence" value="ECO:0007669"/>
    <property type="project" value="UniProtKB-UniRule"/>
</dbReference>
<dbReference type="CDD" id="cd02440">
    <property type="entry name" value="AdoMet_MTases"/>
    <property type="match status" value="1"/>
</dbReference>
<dbReference type="FunFam" id="3.40.50.150:FF:000035">
    <property type="entry name" value="tRNA (guanine-N(7)-)-methyltransferase"/>
    <property type="match status" value="1"/>
</dbReference>
<dbReference type="Gene3D" id="3.40.50.150">
    <property type="entry name" value="Vaccinia Virus protein VP39"/>
    <property type="match status" value="1"/>
</dbReference>
<dbReference type="HAMAP" id="MF_01057">
    <property type="entry name" value="tRNA_methyltr_TrmB"/>
    <property type="match status" value="1"/>
</dbReference>
<dbReference type="InterPro" id="IPR029063">
    <property type="entry name" value="SAM-dependent_MTases_sf"/>
</dbReference>
<dbReference type="InterPro" id="IPR003358">
    <property type="entry name" value="tRNA_(Gua-N-7)_MeTrfase_Trmb"/>
</dbReference>
<dbReference type="InterPro" id="IPR055361">
    <property type="entry name" value="tRNA_methyltr_TrmB_bact"/>
</dbReference>
<dbReference type="NCBIfam" id="NF001080">
    <property type="entry name" value="PRK00121.2-2"/>
    <property type="match status" value="1"/>
</dbReference>
<dbReference type="NCBIfam" id="TIGR00091">
    <property type="entry name" value="tRNA (guanosine(46)-N7)-methyltransferase TrmB"/>
    <property type="match status" value="1"/>
</dbReference>
<dbReference type="PANTHER" id="PTHR23417">
    <property type="entry name" value="3-DEOXY-D-MANNO-OCTULOSONIC-ACID TRANSFERASE/TRNA GUANINE-N 7 - -METHYLTRANSFERASE"/>
    <property type="match status" value="1"/>
</dbReference>
<dbReference type="PANTHER" id="PTHR23417:SF14">
    <property type="entry name" value="PENTACOTRIPEPTIDE-REPEAT REGION OF PRORP DOMAIN-CONTAINING PROTEIN"/>
    <property type="match status" value="1"/>
</dbReference>
<dbReference type="Pfam" id="PF02390">
    <property type="entry name" value="Methyltransf_4"/>
    <property type="match status" value="1"/>
</dbReference>
<dbReference type="SUPFAM" id="SSF53335">
    <property type="entry name" value="S-adenosyl-L-methionine-dependent methyltransferases"/>
    <property type="match status" value="1"/>
</dbReference>
<dbReference type="PROSITE" id="PS51625">
    <property type="entry name" value="SAM_MT_TRMB"/>
    <property type="match status" value="1"/>
</dbReference>